<keyword id="KW-0687">Ribonucleoprotein</keyword>
<keyword id="KW-0689">Ribosomal protein</keyword>
<gene>
    <name evidence="1" type="primary">rps17e</name>
    <name type="ordered locus">Pars_0053</name>
</gene>
<feature type="chain" id="PRO_1000050629" description="Small ribosomal subunit protein eS17">
    <location>
        <begin position="1"/>
        <end position="71"/>
    </location>
</feature>
<reference key="1">
    <citation type="submission" date="2007-04" db="EMBL/GenBank/DDBJ databases">
        <title>Complete sequence of Pyrobaculum arsenaticum DSM 13514.</title>
        <authorList>
            <consortium name="US DOE Joint Genome Institute"/>
            <person name="Copeland A."/>
            <person name="Lucas S."/>
            <person name="Lapidus A."/>
            <person name="Barry K."/>
            <person name="Glavina del Rio T."/>
            <person name="Dalin E."/>
            <person name="Tice H."/>
            <person name="Pitluck S."/>
            <person name="Chain P."/>
            <person name="Malfatti S."/>
            <person name="Shin M."/>
            <person name="Vergez L."/>
            <person name="Schmutz J."/>
            <person name="Larimer F."/>
            <person name="Land M."/>
            <person name="Hauser L."/>
            <person name="Kyrpides N."/>
            <person name="Mikhailova N."/>
            <person name="Cozen A.E."/>
            <person name="Fitz-Gibbon S.T."/>
            <person name="House C.H."/>
            <person name="Saltikov C."/>
            <person name="Lowe T.M."/>
            <person name="Richardson P."/>
        </authorList>
    </citation>
    <scope>NUCLEOTIDE SEQUENCE [LARGE SCALE GENOMIC DNA]</scope>
    <source>
        <strain>ATCC 700994 / DSM 13514 / JCM 11321 / PZ6</strain>
    </source>
</reference>
<evidence type="ECO:0000255" key="1">
    <source>
        <dbReference type="HAMAP-Rule" id="MF_00511"/>
    </source>
</evidence>
<evidence type="ECO:0000305" key="2"/>
<accession>A4WH03</accession>
<sequence length="71" mass="8126">MGRVKPKYIKSLAEKLLETYPDRFTDSFEENKKAVAELAEIPSKTVRNKVAGYITRLIKRRKAQEKAETAA</sequence>
<dbReference type="EMBL" id="CP000660">
    <property type="protein sequence ID" value="ABP49670.1"/>
    <property type="molecule type" value="Genomic_DNA"/>
</dbReference>
<dbReference type="SMR" id="A4WH03"/>
<dbReference type="STRING" id="340102.Pars_0053"/>
<dbReference type="KEGG" id="pas:Pars_0053"/>
<dbReference type="HOGENOM" id="CLU_176720_2_0_2"/>
<dbReference type="OrthoDB" id="52479at2157"/>
<dbReference type="PhylomeDB" id="A4WH03"/>
<dbReference type="Proteomes" id="UP000001567">
    <property type="component" value="Chromosome"/>
</dbReference>
<dbReference type="GO" id="GO:0005829">
    <property type="term" value="C:cytosol"/>
    <property type="evidence" value="ECO:0007669"/>
    <property type="project" value="UniProtKB-ARBA"/>
</dbReference>
<dbReference type="GO" id="GO:1990904">
    <property type="term" value="C:ribonucleoprotein complex"/>
    <property type="evidence" value="ECO:0007669"/>
    <property type="project" value="UniProtKB-KW"/>
</dbReference>
<dbReference type="GO" id="GO:0005840">
    <property type="term" value="C:ribosome"/>
    <property type="evidence" value="ECO:0007669"/>
    <property type="project" value="UniProtKB-KW"/>
</dbReference>
<dbReference type="GO" id="GO:0003735">
    <property type="term" value="F:structural constituent of ribosome"/>
    <property type="evidence" value="ECO:0007669"/>
    <property type="project" value="InterPro"/>
</dbReference>
<dbReference type="GO" id="GO:0006412">
    <property type="term" value="P:translation"/>
    <property type="evidence" value="ECO:0007669"/>
    <property type="project" value="UniProtKB-UniRule"/>
</dbReference>
<dbReference type="Gene3D" id="1.10.60.20">
    <property type="entry name" value="Ribosomal protein S17e-like"/>
    <property type="match status" value="1"/>
</dbReference>
<dbReference type="HAMAP" id="MF_00511">
    <property type="entry name" value="Ribosomal_eS17"/>
    <property type="match status" value="1"/>
</dbReference>
<dbReference type="InterPro" id="IPR001210">
    <property type="entry name" value="Ribosomal_eS17"/>
</dbReference>
<dbReference type="InterPro" id="IPR018273">
    <property type="entry name" value="Ribosomal_eS17_CS"/>
</dbReference>
<dbReference type="InterPro" id="IPR036401">
    <property type="entry name" value="Ribosomal_eS17_sf"/>
</dbReference>
<dbReference type="NCBIfam" id="NF002242">
    <property type="entry name" value="PRK01151.1"/>
    <property type="match status" value="1"/>
</dbReference>
<dbReference type="PANTHER" id="PTHR10732">
    <property type="entry name" value="40S RIBOSOMAL PROTEIN S17"/>
    <property type="match status" value="1"/>
</dbReference>
<dbReference type="PANTHER" id="PTHR10732:SF0">
    <property type="entry name" value="40S RIBOSOMAL PROTEIN S17"/>
    <property type="match status" value="1"/>
</dbReference>
<dbReference type="Pfam" id="PF00833">
    <property type="entry name" value="Ribosomal_S17e"/>
    <property type="match status" value="1"/>
</dbReference>
<dbReference type="SUPFAM" id="SSF116820">
    <property type="entry name" value="Rps17e-like"/>
    <property type="match status" value="1"/>
</dbReference>
<dbReference type="PROSITE" id="PS00712">
    <property type="entry name" value="RIBOSOMAL_S17E"/>
    <property type="match status" value="1"/>
</dbReference>
<name>RS17E_PYRAR</name>
<organism>
    <name type="scientific">Pyrobaculum arsenaticum (strain DSM 13514 / JCM 11321 / PZ6)</name>
    <dbReference type="NCBI Taxonomy" id="340102"/>
    <lineage>
        <taxon>Archaea</taxon>
        <taxon>Thermoproteota</taxon>
        <taxon>Thermoprotei</taxon>
        <taxon>Thermoproteales</taxon>
        <taxon>Thermoproteaceae</taxon>
        <taxon>Pyrobaculum</taxon>
    </lineage>
</organism>
<protein>
    <recommendedName>
        <fullName evidence="1">Small ribosomal subunit protein eS17</fullName>
    </recommendedName>
    <alternativeName>
        <fullName evidence="2">30S ribosomal protein S17e</fullName>
    </alternativeName>
</protein>
<proteinExistence type="inferred from homology"/>
<comment type="similarity">
    <text evidence="1">Belongs to the eukaryotic ribosomal protein eS17 family.</text>
</comment>